<organism>
    <name type="scientific">Aquifex aeolicus (strain VF5)</name>
    <dbReference type="NCBI Taxonomy" id="224324"/>
    <lineage>
        <taxon>Bacteria</taxon>
        <taxon>Pseudomonadati</taxon>
        <taxon>Aquificota</taxon>
        <taxon>Aquificia</taxon>
        <taxon>Aquificales</taxon>
        <taxon>Aquificaceae</taxon>
        <taxon>Aquifex</taxon>
    </lineage>
</organism>
<keyword id="KW-0997">Cell inner membrane</keyword>
<keyword id="KW-1003">Cell membrane</keyword>
<keyword id="KW-0472">Membrane</keyword>
<keyword id="KW-0653">Protein transport</keyword>
<keyword id="KW-1185">Reference proteome</keyword>
<keyword id="KW-0811">Translocation</keyword>
<keyword id="KW-0812">Transmembrane</keyword>
<keyword id="KW-1133">Transmembrane helix</keyword>
<keyword id="KW-0813">Transport</keyword>
<reference key="1">
    <citation type="journal article" date="1998" name="Nature">
        <title>The complete genome of the hyperthermophilic bacterium Aquifex aeolicus.</title>
        <authorList>
            <person name="Deckert G."/>
            <person name="Warren P.V."/>
            <person name="Gaasterland T."/>
            <person name="Young W.G."/>
            <person name="Lenox A.L."/>
            <person name="Graham D.E."/>
            <person name="Overbeek R."/>
            <person name="Snead M.A."/>
            <person name="Keller M."/>
            <person name="Aujay M."/>
            <person name="Huber R."/>
            <person name="Feldman R.A."/>
            <person name="Short J.M."/>
            <person name="Olsen G.J."/>
            <person name="Swanson R.V."/>
        </authorList>
    </citation>
    <scope>NUCLEOTIDE SEQUENCE [LARGE SCALE GENOMIC DNA]</scope>
    <source>
        <strain>VF5</strain>
    </source>
</reference>
<name>YAJC_AQUAE</name>
<accession>O67295</accession>
<gene>
    <name type="primary">yajC</name>
    <name type="ordered locus">aq_1254</name>
</gene>
<proteinExistence type="inferred from homology"/>
<evidence type="ECO:0000250" key="1">
    <source>
        <dbReference type="UniProtKB" id="P0ADZ7"/>
    </source>
</evidence>
<evidence type="ECO:0000255" key="2"/>
<evidence type="ECO:0000305" key="3"/>
<feature type="chain" id="PRO_0000097018" description="Sec translocon accessory complex subunit YajC">
    <location>
        <begin position="1"/>
        <end position="102"/>
    </location>
</feature>
<feature type="transmembrane region" description="Helical" evidence="2">
    <location>
        <begin position="9"/>
        <end position="29"/>
    </location>
</feature>
<dbReference type="EMBL" id="AE000657">
    <property type="protein sequence ID" value="AAC07266.1"/>
    <property type="molecule type" value="Genomic_DNA"/>
</dbReference>
<dbReference type="PIR" id="D70408">
    <property type="entry name" value="D70408"/>
</dbReference>
<dbReference type="RefSeq" id="NP_213859.1">
    <property type="nucleotide sequence ID" value="NC_000918.1"/>
</dbReference>
<dbReference type="RefSeq" id="WP_010880797.1">
    <property type="nucleotide sequence ID" value="NC_000918.1"/>
</dbReference>
<dbReference type="SMR" id="O67295"/>
<dbReference type="FunCoup" id="O67295">
    <property type="interactions" value="163"/>
</dbReference>
<dbReference type="STRING" id="224324.aq_1254"/>
<dbReference type="EnsemblBacteria" id="AAC07266">
    <property type="protein sequence ID" value="AAC07266"/>
    <property type="gene ID" value="aq_1254"/>
</dbReference>
<dbReference type="KEGG" id="aae:aq_1254"/>
<dbReference type="PATRIC" id="fig|224324.8.peg.976"/>
<dbReference type="eggNOG" id="COG1862">
    <property type="taxonomic scope" value="Bacteria"/>
</dbReference>
<dbReference type="HOGENOM" id="CLU_116157_2_0_0"/>
<dbReference type="InParanoid" id="O67295"/>
<dbReference type="OrthoDB" id="9800132at2"/>
<dbReference type="Proteomes" id="UP000000798">
    <property type="component" value="Chromosome"/>
</dbReference>
<dbReference type="GO" id="GO:0005886">
    <property type="term" value="C:plasma membrane"/>
    <property type="evidence" value="ECO:0000318"/>
    <property type="project" value="GO_Central"/>
</dbReference>
<dbReference type="GO" id="GO:0015031">
    <property type="term" value="P:protein transport"/>
    <property type="evidence" value="ECO:0007669"/>
    <property type="project" value="UniProtKB-KW"/>
</dbReference>
<dbReference type="InterPro" id="IPR003849">
    <property type="entry name" value="Preprotein_translocase_YajC"/>
</dbReference>
<dbReference type="NCBIfam" id="TIGR00739">
    <property type="entry name" value="yajC"/>
    <property type="match status" value="1"/>
</dbReference>
<dbReference type="PANTHER" id="PTHR33909">
    <property type="entry name" value="SEC TRANSLOCON ACCESSORY COMPLEX SUBUNIT YAJC"/>
    <property type="match status" value="1"/>
</dbReference>
<dbReference type="PANTHER" id="PTHR33909:SF1">
    <property type="entry name" value="SEC TRANSLOCON ACCESSORY COMPLEX SUBUNIT YAJC"/>
    <property type="match status" value="1"/>
</dbReference>
<dbReference type="Pfam" id="PF02699">
    <property type="entry name" value="YajC"/>
    <property type="match status" value="1"/>
</dbReference>
<dbReference type="PRINTS" id="PR01853">
    <property type="entry name" value="YAJCTRNLCASE"/>
</dbReference>
<dbReference type="SMART" id="SM01323">
    <property type="entry name" value="YajC"/>
    <property type="match status" value="1"/>
</dbReference>
<sequence>MEQQSPVGALLFQIIFLVAIFLMFYFLIIRPQKKERERHRKFLESLKKGDKVITSSGIWGTVVEIGDRTITLKVDANTKITFSKEAIVAYQPGYEKKEEKKD</sequence>
<protein>
    <recommendedName>
        <fullName>Sec translocon accessory complex subunit YajC</fullName>
    </recommendedName>
</protein>
<comment type="function">
    <text evidence="1">The SecYEG-SecDF-YajC-YidC holo-translocon (HTL) protein secretase/insertase is a supercomplex required for protein secretion, insertion of proteins into membranes, and assembly of membrane protein complexes. While the SecYEG complex is essential for assembly of a number of proteins and complexes, the SecDF-YajC-YidC subcomplex facilitates these functions.</text>
</comment>
<comment type="subunit">
    <text evidence="1">Part of the SecDF-YidC-YajC translocase complex. The SecDF-YidC-YajC translocase forms a supercomplex with SecYEG, called the holo-translocon (HTL).</text>
</comment>
<comment type="subcellular location">
    <subcellularLocation>
        <location evidence="1">Cell inner membrane</location>
        <topology evidence="1">Single-pass membrane protein</topology>
    </subcellularLocation>
</comment>
<comment type="similarity">
    <text evidence="3">Belongs to the YajC family.</text>
</comment>